<name>CDK9_MOUSE</name>
<feature type="chain" id="PRO_0000085801" description="Cyclin-dependent kinase 9">
    <location>
        <begin position="1"/>
        <end position="372"/>
    </location>
</feature>
<feature type="domain" description="Protein kinase" evidence="3">
    <location>
        <begin position="19"/>
        <end position="315"/>
    </location>
</feature>
<feature type="region of interest" description="T-loop" evidence="1">
    <location>
        <begin position="166"/>
        <end position="191"/>
    </location>
</feature>
<feature type="region of interest" description="Disordered" evidence="5">
    <location>
        <begin position="343"/>
        <end position="372"/>
    </location>
</feature>
<feature type="compositionally biased region" description="Polar residues" evidence="5">
    <location>
        <begin position="347"/>
        <end position="366"/>
    </location>
</feature>
<feature type="active site" description="Proton acceptor" evidence="3 4">
    <location>
        <position position="149"/>
    </location>
</feature>
<feature type="binding site" evidence="3">
    <location>
        <begin position="25"/>
        <end position="33"/>
    </location>
    <ligand>
        <name>ATP</name>
        <dbReference type="ChEBI" id="CHEBI:30616"/>
    </ligand>
</feature>
<feature type="binding site" evidence="3">
    <location>
        <position position="48"/>
    </location>
    <ligand>
        <name>ATP</name>
        <dbReference type="ChEBI" id="CHEBI:30616"/>
    </ligand>
</feature>
<feature type="binding site" evidence="3">
    <location>
        <begin position="104"/>
        <end position="106"/>
    </location>
    <ligand>
        <name>ATP</name>
        <dbReference type="ChEBI" id="CHEBI:30616"/>
    </ligand>
</feature>
<feature type="binding site" evidence="3">
    <location>
        <position position="167"/>
    </location>
    <ligand>
        <name>ATP</name>
        <dbReference type="ChEBI" id="CHEBI:30616"/>
    </ligand>
</feature>
<feature type="modified residue" description="N6-acetyllysine; by EP300/CBP, PCAF/KAT2B and GCN5/KAT2A" evidence="2">
    <location>
        <position position="44"/>
    </location>
</feature>
<feature type="modified residue" description="N6-acetyllysine; by PCAF/KAT2B and GCN5/KAT2A" evidence="2">
    <location>
        <position position="48"/>
    </location>
</feature>
<feature type="modified residue" description="Phosphoserine" evidence="2">
    <location>
        <position position="175"/>
    </location>
</feature>
<feature type="modified residue" description="Phosphothreonine; by CaMK1D" evidence="2">
    <location>
        <position position="186"/>
    </location>
</feature>
<feature type="modified residue" description="Phosphoserine; by CDK9 and PKA" evidence="2">
    <location>
        <position position="347"/>
    </location>
</feature>
<feature type="modified residue" description="Phosphothreonine; by CDK9" evidence="2">
    <location>
        <position position="350"/>
    </location>
</feature>
<feature type="modified residue" description="Phosphoserine; by CDK9" evidence="2">
    <location>
        <position position="353"/>
    </location>
</feature>
<feature type="modified residue" description="Phosphothreonine; by CDK9" evidence="2">
    <location>
        <position position="354"/>
    </location>
</feature>
<feature type="modified residue" description="Phosphoserine; by CDK9" evidence="2">
    <location>
        <position position="357"/>
    </location>
</feature>
<feature type="modified residue" description="Phosphothreonine; by CDK9" evidence="2">
    <location>
        <position position="362"/>
    </location>
</feature>
<feature type="modified residue" description="Phosphothreonine; by CDK9" evidence="2">
    <location>
        <position position="363"/>
    </location>
</feature>
<feature type="splice variant" id="VSP_016290" description="In isoform 3." evidence="10">
    <location>
        <begin position="1"/>
        <end position="129"/>
    </location>
</feature>
<feature type="splice variant" id="VSP_016289" description="In isoform 2." evidence="10">
    <location>
        <begin position="1"/>
        <end position="51"/>
    </location>
</feature>
<feature type="sequence conflict" description="In Ref. 3; BAE34054." evidence="11" ref="3">
    <original>T</original>
    <variation>R</variation>
    <location>
        <position position="122"/>
    </location>
</feature>
<feature type="sequence conflict" description="In Ref. 3; BAE25055." evidence="11" ref="3">
    <original>N</original>
    <variation>S</variation>
    <location>
        <position position="154"/>
    </location>
</feature>
<sequence length="372" mass="42762">MAKQYDSVECPFCDEVTKYEKLAKIGQGTFGEVFKAKHRQTGQKVALKKVLMENEKEGFPITALREIKILQLLKHENVVNLIEICRTKASPYNRCKGSIYLVFDFCEHDLAGLLSNVLVKFTLSEIKRVMQMLLNGLYYIHRNKILHRDMKAANVLITRDGVLKLADFGLARAFSLAKNSQPNRYTNRVVTLWYRPPELLLGERDYGPPIDLWGAGCIMAEMWTRSPIMQGNTEQHQLALISQLCGSITPEVWPNVDKYELFEKLELVKGQKRKVKDRLKAYVRDPYALDLIDKLLVLDPAQRIDSDDALNHDFFWSDPMPSDLKGMLSTHLTSMFEYLAPPRRKGSQITQQSTNQSRNPATTNQTEFERVF</sequence>
<evidence type="ECO:0000250" key="1"/>
<evidence type="ECO:0000250" key="2">
    <source>
        <dbReference type="UniProtKB" id="P50750"/>
    </source>
</evidence>
<evidence type="ECO:0000255" key="3">
    <source>
        <dbReference type="PROSITE-ProRule" id="PRU00159"/>
    </source>
</evidence>
<evidence type="ECO:0000255" key="4">
    <source>
        <dbReference type="PROSITE-ProRule" id="PRU10027"/>
    </source>
</evidence>
<evidence type="ECO:0000256" key="5">
    <source>
        <dbReference type="SAM" id="MobiDB-lite"/>
    </source>
</evidence>
<evidence type="ECO:0000269" key="6">
    <source>
    </source>
</evidence>
<evidence type="ECO:0000269" key="7">
    <source>
    </source>
</evidence>
<evidence type="ECO:0000269" key="8">
    <source>
    </source>
</evidence>
<evidence type="ECO:0000269" key="9">
    <source>
    </source>
</evidence>
<evidence type="ECO:0000303" key="10">
    <source>
    </source>
</evidence>
<evidence type="ECO:0000305" key="11"/>
<comment type="function">
    <text evidence="2">Protein kinase involved in the regulation of transcription. Member of the cyclin-dependent kinase pair (CDK9/cyclin-T) complex, also called positive transcription elongation factor b (P-TEFb), which facilitates the transition from abortive to productive elongation by phosphorylating the CTD (C-terminal domain) of the large subunit of RNA polymerase II (RNAP II) POLR2A, SUPT5H and RDBP. This complex is inactive when in the 7SK snRNP complex form. Phosphorylates EP300, MYOD1, RPB1/POLR2A and AR and the negative elongation factors DSIF and NELFE. Regulates cytokine inducible transcription networks by facilitating promoter recognition of target transcription factors (e.g. TNF-inducible RELA/p65 activation and IL-6-inducible STAT3 signaling). Promotes RNA synthesis in genetic programs for cell growth, differentiation and viral pathogenesis. P-TEFb is also involved in cotranscriptional histone modification, mRNA processing and mRNA export. Modulates a complex network of chromatin modifications including histone H2B monoubiquitination (H2Bub1), H3 lysine 4 trimethylation (H3K4me3) and H3K36me3; integrates phosphorylation during transcription with chromatin modifications to control co-transcriptional histone mRNA processing. The CDK9/cyclin-K complex has also a kinase activity towards CTD of RNAP II and can substitute for CDK9/cyclin-T P-TEFb in vitro. Replication stress response protein; the CDK9/cyclin-K complex is required for genome integrity maintenance, by promoting cell cycle recovery from replication arrest and limiting single-stranded DNA amount in response to replication stress, thus reducing the breakdown of stalled replication forks and avoiding DNA damage. In addition, probable function in DNA repair of isoform 2 via interaction with KU70/XRCC6. Promotes cardiac myocyte enlargement. RPB1/POLR2A phosphorylation on 'Ser-2' in CTD activates transcription. AR phosphorylation modulates AR transcription factor promoter selectivity and cell growth. DSIF and NELF phosphorylation promotes transcription by inhibiting their negative effect. The phosphorylation of MYOD1 enhances its transcriptional activity and thus promotes muscle differentiation. Catalyzes phosphorylation of KAT5, promoting KAT5 recruitment to chromatin and histone acetyltransferase activity.</text>
</comment>
<comment type="catalytic activity">
    <reaction evidence="2">
        <text>L-seryl-[protein] + ATP = O-phospho-L-seryl-[protein] + ADP + H(+)</text>
        <dbReference type="Rhea" id="RHEA:17989"/>
        <dbReference type="Rhea" id="RHEA-COMP:9863"/>
        <dbReference type="Rhea" id="RHEA-COMP:11604"/>
        <dbReference type="ChEBI" id="CHEBI:15378"/>
        <dbReference type="ChEBI" id="CHEBI:29999"/>
        <dbReference type="ChEBI" id="CHEBI:30616"/>
        <dbReference type="ChEBI" id="CHEBI:83421"/>
        <dbReference type="ChEBI" id="CHEBI:456216"/>
        <dbReference type="EC" id="2.7.11.22"/>
    </reaction>
    <physiologicalReaction direction="left-to-right" evidence="2">
        <dbReference type="Rhea" id="RHEA:17990"/>
    </physiologicalReaction>
</comment>
<comment type="catalytic activity">
    <reaction evidence="2">
        <text>L-threonyl-[protein] + ATP = O-phospho-L-threonyl-[protein] + ADP + H(+)</text>
        <dbReference type="Rhea" id="RHEA:46608"/>
        <dbReference type="Rhea" id="RHEA-COMP:11060"/>
        <dbReference type="Rhea" id="RHEA-COMP:11605"/>
        <dbReference type="ChEBI" id="CHEBI:15378"/>
        <dbReference type="ChEBI" id="CHEBI:30013"/>
        <dbReference type="ChEBI" id="CHEBI:30616"/>
        <dbReference type="ChEBI" id="CHEBI:61977"/>
        <dbReference type="ChEBI" id="CHEBI:456216"/>
        <dbReference type="EC" id="2.7.11.22"/>
    </reaction>
    <physiologicalReaction direction="left-to-right" evidence="2">
        <dbReference type="Rhea" id="RHEA:46609"/>
    </physiologicalReaction>
</comment>
<comment type="catalytic activity">
    <reaction evidence="2">
        <text>[DNA-directed RNA polymerase] + ATP = phospho-[DNA-directed RNA polymerase] + ADP + H(+)</text>
        <dbReference type="Rhea" id="RHEA:10216"/>
        <dbReference type="Rhea" id="RHEA-COMP:11321"/>
        <dbReference type="Rhea" id="RHEA-COMP:11322"/>
        <dbReference type="ChEBI" id="CHEBI:15378"/>
        <dbReference type="ChEBI" id="CHEBI:30616"/>
        <dbReference type="ChEBI" id="CHEBI:43176"/>
        <dbReference type="ChEBI" id="CHEBI:68546"/>
        <dbReference type="ChEBI" id="CHEBI:456216"/>
        <dbReference type="EC" id="2.7.11.23"/>
    </reaction>
    <physiologicalReaction direction="left-to-right" evidence="2">
        <dbReference type="Rhea" id="RHEA:10217"/>
    </physiologicalReaction>
</comment>
<comment type="activity regulation">
    <text evidence="2">Activation by Thr-186 phosphorylation is calcium Ca(2+) signaling pathway-dependent; actively inactivated by dephosphorylation mediated by PPP1CA, PPM1A and PPM1B. Reversibly repressed by acetylation at Lys-44 and Lys-48 (By similarity).</text>
</comment>
<comment type="subunit">
    <text evidence="2 6 7 8">Component of the super elongation complex (SEC), at least composed of EAF1, EAF2, CDK9, MLLT3/AF9, AFF (AFF1 or AFF4), the P-TEFb complex and ELL (ELL, ELL2 or ELL3). Associates with CCNT1/cyclin-T1, CCNT2/cyclin-T2 (isoform A and isoform B) or CCNK/cyclin-K to form active P-TEFb. P-TEFb forms a complex with AFF4/AF5Q31 and is part of the super elongation complex (SEC). Component of a complex which is composed of at least 5 members: HTATSF1/Tat-SF1, P-TEFb complex, RNA pol II, SUPT5H, and NCL/nucleolin. Associates with UBR5 and forms a transcription regulatory complex composed of CDK9, RNAP II, UBR5 and TFIIS/TCEA1 that can stimulate target gene transcription (e.g. gamma fibrinogen/FGG) by recruiting their promoters. Component of the 7SK snRNP inactive complex which is composed of at least 8 members: P-TEFb (composed of CDK9 and CCNT1/cyclin-T1), HEXIM1, HEXIM2, LARP7, BCDIN3, SART3 proteins and 7SK and U6 snRNAs. This inactive 7SK snRNP complex can also interact with NCOR1 and HDAC3, probably to regulate CDK9 acetylation. Release of P-TEFb from P-TEFb/7SK snRNP complex requires both PP2B to transduce calcium Ca(2+) signaling in response to stimuli (e.g. UV or hexamethylene bisacetamide (HMBA)), and PPP1CA to dephosphorylate Thr-186. This released P-TEFb remains inactive in the pre-initiation complex with BRD4 until new Thr-186 phosphorylation occurs after the synthesis of a short RNA. Interacts with BRD4; to target chromatin binding. Interacts with JMJD6. Interacts with activated nuclear STAT3 and RELA/p65. Binds to AR and MYOD1. Forms a complex composed of CDK9, CCNT1/cyclin-T1, EP300 and GATA4 that stimulates hypertrophy in cardiomyocytes (By similarity). The large PER complex involved in the repression of transcriptional termination is composed of at least PER2, CDK9, DDX5, DHX9, NCBP1 and POLR2A (active) (PubMed:22767893). Interacts with HSF1 (By similarity). Interacts with TBX21 (PubMed:27292648). Interacts with WDR43 (PubMed:31128943). Interacts with ZMYND8; the association appears to occur between homodimeric ZMYND8 and the activated form of the P-TEFb complex (By similarity).</text>
</comment>
<comment type="interaction">
    <interactant intactId="EBI-2654963">
        <id>Q99J95</id>
    </interactant>
    <interactant intactId="EBI-6260929">
        <id>Q91Y44</id>
        <label>Brdt</label>
    </interactant>
    <organismsDiffer>false</organismsDiffer>
    <experiments>3</experiments>
</comment>
<comment type="interaction">
    <interactant intactId="EBI-2654963">
        <id>Q99J95</id>
    </interactant>
    <interactant intactId="EBI-1183003">
        <id>P28574</id>
        <label>Max</label>
    </interactant>
    <organismsDiffer>false</organismsDiffer>
    <experiments>2</experiments>
</comment>
<comment type="interaction">
    <interactant intactId="EBI-2654963">
        <id>Q99J95</id>
    </interactant>
    <interactant intactId="EBI-2550402">
        <id>Q62093</id>
        <label>Srsf2</label>
    </interactant>
    <organismsDiffer>false</organismsDiffer>
    <experiments>3</experiments>
</comment>
<comment type="subcellular location">
    <subcellularLocation>
        <location evidence="6">Nucleus</location>
    </subcellularLocation>
    <subcellularLocation>
        <location evidence="1">Cytoplasm</location>
    </subcellularLocation>
    <subcellularLocation>
        <location evidence="1">Nucleus</location>
        <location evidence="1">PML body</location>
    </subcellularLocation>
    <text evidence="1">Accumulates on chromatin in response to replication stress. Complexed with CCNT1 in nuclear speckles, but uncomplexed form in the cytoplasm. The translocation from nucleus to cytoplasm is XPO1/CRM1-dependent. Associates with PML body when acetylated (By similarity).</text>
</comment>
<comment type="alternative products">
    <event type="alternative splicing"/>
    <isoform>
        <id>Q99J95-1</id>
        <name>1</name>
        <sequence type="displayed"/>
    </isoform>
    <isoform>
        <id>Q99J95-2</id>
        <name>2</name>
        <sequence type="described" ref="VSP_016289"/>
    </isoform>
    <isoform>
        <id>Q99J95-3</id>
        <name>3</name>
        <sequence type="described" ref="VSP_016290"/>
    </isoform>
</comment>
<comment type="tissue specificity">
    <text evidence="9">Expressed at high levels in brain and kidney.</text>
</comment>
<comment type="PTM">
    <text evidence="2">Autophosphorylation at Thr-186, Ser-347, Thr-350, Ser-353, Thr-354 and Ser-357 triggers kinase activity by promoting cyclin and substrate binding upon conformational changes. Thr-186 phosphorylation requires the calcium Ca(2+) signaling pathway, including CaMK1D and calmodulin. This inhibition is relieved by Thr-29 dephosphorylation. Phosphorylation at Ser-175 inhibits kinase activity. Can be phosphorylated on either Thr-362 or Thr-363 but not on both simultaneously (By similarity).</text>
</comment>
<comment type="PTM">
    <text evidence="2">Dephosphorylation of Thr-186 by PPM1A and PPM1B blocks CDK9 activity and may lead to CDK9 proteasomal degradation. However, PPP1CA-mediated Thr-186 dephosphorylation is required to release P-TEFb from its inactive P-TEFb/7SK snRNP complex. Dephosphorylated at Ser-347 by the PNUTS-PP1 complex during RNA polymerase II transcription pause-release. Dephosphorylation of C-terminus Thr and Ser residues by protein phosphatase-1 (PP1) triggers CDK9 activity.</text>
</comment>
<comment type="PTM">
    <text evidence="2">N6-acetylation of Lys-44 promotes kinase activity, whereas acetylation of both Lys-44 and Lys-48 mediated by PCAF/KAT2B and GCN5/KAT2A reduces kinase activity. The acetylated form associates with PML bodies in the nuclear matrix and with the transcriptionally silent HIV-1 genome; deacetylated upon transcription stimulation. Deacetylated by SIRT7, promoting the kinase activity and subsequent 'Ser-2' phosphorylation of the C-terminal domain (CTD) of RNA polymerase II.</text>
</comment>
<comment type="PTM">
    <text evidence="2">Polyubiquitinated and thus activated by UBR5. This ubiquitination is promoted by TFIIS/TCEA1 and favors 'Ser-2' phosphorylation of RPB1/POLR2A CTD (By similarity).</text>
</comment>
<comment type="similarity">
    <text evidence="11">Belongs to the protein kinase superfamily. CMGC Ser/Thr protein kinase family. CDC2/CDKX subfamily.</text>
</comment>
<comment type="sequence caution" evidence="11">
    <conflict type="frameshift">
        <sequence resource="EMBL-CDS" id="BAE25966"/>
    </conflict>
</comment>
<gene>
    <name type="primary">Cdk9</name>
</gene>
<keyword id="KW-0007">Acetylation</keyword>
<keyword id="KW-0025">Alternative splicing</keyword>
<keyword id="KW-0067">ATP-binding</keyword>
<keyword id="KW-0963">Cytoplasm</keyword>
<keyword id="KW-0227">DNA damage</keyword>
<keyword id="KW-0234">DNA repair</keyword>
<keyword id="KW-0418">Kinase</keyword>
<keyword id="KW-0547">Nucleotide-binding</keyword>
<keyword id="KW-0539">Nucleus</keyword>
<keyword id="KW-0597">Phosphoprotein</keyword>
<keyword id="KW-1185">Reference proteome</keyword>
<keyword id="KW-0723">Serine/threonine-protein kinase</keyword>
<keyword id="KW-0804">Transcription</keyword>
<keyword id="KW-0805">Transcription regulation</keyword>
<keyword id="KW-0808">Transferase</keyword>
<keyword id="KW-0832">Ubl conjugation</keyword>
<proteinExistence type="evidence at protein level"/>
<reference key="1">
    <citation type="journal article" date="1998" name="J. Cell. Physiol.">
        <title>Cloning of murine CDK9/PITALRE and its tissue-specific expression in development.</title>
        <authorList>
            <person name="Bagella L."/>
            <person name="MacLachlan T.K."/>
            <person name="Buono R.J."/>
            <person name="Pisano M.M."/>
            <person name="Giordano A."/>
            <person name="De Luca A."/>
        </authorList>
    </citation>
    <scope>NUCLEOTIDE SEQUENCE [MRNA] (ISOFORM 1)</scope>
    <scope>TISSUE SPECIFICITY</scope>
</reference>
<reference key="2">
    <citation type="journal article" date="2000" name="J. Cell. Biochem.">
        <title>Genomic organization, promoter analysis, and chromosomal mapping of the mouse gene encoding Cdk9.</title>
        <authorList>
            <person name="Bagella L."/>
            <person name="Stiegler P."/>
            <person name="De Luca A."/>
            <person name="Siracusa L.D."/>
            <person name="Giordano A."/>
        </authorList>
    </citation>
    <scope>NUCLEOTIDE SEQUENCE [GENOMIC DNA]</scope>
</reference>
<reference key="3">
    <citation type="journal article" date="2005" name="Science">
        <title>The transcriptional landscape of the mammalian genome.</title>
        <authorList>
            <person name="Carninci P."/>
            <person name="Kasukawa T."/>
            <person name="Katayama S."/>
            <person name="Gough J."/>
            <person name="Frith M.C."/>
            <person name="Maeda N."/>
            <person name="Oyama R."/>
            <person name="Ravasi T."/>
            <person name="Lenhard B."/>
            <person name="Wells C."/>
            <person name="Kodzius R."/>
            <person name="Shimokawa K."/>
            <person name="Bajic V.B."/>
            <person name="Brenner S.E."/>
            <person name="Batalov S."/>
            <person name="Forrest A.R."/>
            <person name="Zavolan M."/>
            <person name="Davis M.J."/>
            <person name="Wilming L.G."/>
            <person name="Aidinis V."/>
            <person name="Allen J.E."/>
            <person name="Ambesi-Impiombato A."/>
            <person name="Apweiler R."/>
            <person name="Aturaliya R.N."/>
            <person name="Bailey T.L."/>
            <person name="Bansal M."/>
            <person name="Baxter L."/>
            <person name="Beisel K.W."/>
            <person name="Bersano T."/>
            <person name="Bono H."/>
            <person name="Chalk A.M."/>
            <person name="Chiu K.P."/>
            <person name="Choudhary V."/>
            <person name="Christoffels A."/>
            <person name="Clutterbuck D.R."/>
            <person name="Crowe M.L."/>
            <person name="Dalla E."/>
            <person name="Dalrymple B.P."/>
            <person name="de Bono B."/>
            <person name="Della Gatta G."/>
            <person name="di Bernardo D."/>
            <person name="Down T."/>
            <person name="Engstrom P."/>
            <person name="Fagiolini M."/>
            <person name="Faulkner G."/>
            <person name="Fletcher C.F."/>
            <person name="Fukushima T."/>
            <person name="Furuno M."/>
            <person name="Futaki S."/>
            <person name="Gariboldi M."/>
            <person name="Georgii-Hemming P."/>
            <person name="Gingeras T.R."/>
            <person name="Gojobori T."/>
            <person name="Green R.E."/>
            <person name="Gustincich S."/>
            <person name="Harbers M."/>
            <person name="Hayashi Y."/>
            <person name="Hensch T.K."/>
            <person name="Hirokawa N."/>
            <person name="Hill D."/>
            <person name="Huminiecki L."/>
            <person name="Iacono M."/>
            <person name="Ikeo K."/>
            <person name="Iwama A."/>
            <person name="Ishikawa T."/>
            <person name="Jakt M."/>
            <person name="Kanapin A."/>
            <person name="Katoh M."/>
            <person name="Kawasawa Y."/>
            <person name="Kelso J."/>
            <person name="Kitamura H."/>
            <person name="Kitano H."/>
            <person name="Kollias G."/>
            <person name="Krishnan S.P."/>
            <person name="Kruger A."/>
            <person name="Kummerfeld S.K."/>
            <person name="Kurochkin I.V."/>
            <person name="Lareau L.F."/>
            <person name="Lazarevic D."/>
            <person name="Lipovich L."/>
            <person name="Liu J."/>
            <person name="Liuni S."/>
            <person name="McWilliam S."/>
            <person name="Madan Babu M."/>
            <person name="Madera M."/>
            <person name="Marchionni L."/>
            <person name="Matsuda H."/>
            <person name="Matsuzawa S."/>
            <person name="Miki H."/>
            <person name="Mignone F."/>
            <person name="Miyake S."/>
            <person name="Morris K."/>
            <person name="Mottagui-Tabar S."/>
            <person name="Mulder N."/>
            <person name="Nakano N."/>
            <person name="Nakauchi H."/>
            <person name="Ng P."/>
            <person name="Nilsson R."/>
            <person name="Nishiguchi S."/>
            <person name="Nishikawa S."/>
            <person name="Nori F."/>
            <person name="Ohara O."/>
            <person name="Okazaki Y."/>
            <person name="Orlando V."/>
            <person name="Pang K.C."/>
            <person name="Pavan W.J."/>
            <person name="Pavesi G."/>
            <person name="Pesole G."/>
            <person name="Petrovsky N."/>
            <person name="Piazza S."/>
            <person name="Reed J."/>
            <person name="Reid J.F."/>
            <person name="Ring B.Z."/>
            <person name="Ringwald M."/>
            <person name="Rost B."/>
            <person name="Ruan Y."/>
            <person name="Salzberg S.L."/>
            <person name="Sandelin A."/>
            <person name="Schneider C."/>
            <person name="Schoenbach C."/>
            <person name="Sekiguchi K."/>
            <person name="Semple C.A."/>
            <person name="Seno S."/>
            <person name="Sessa L."/>
            <person name="Sheng Y."/>
            <person name="Shibata Y."/>
            <person name="Shimada H."/>
            <person name="Shimada K."/>
            <person name="Silva D."/>
            <person name="Sinclair B."/>
            <person name="Sperling S."/>
            <person name="Stupka E."/>
            <person name="Sugiura K."/>
            <person name="Sultana R."/>
            <person name="Takenaka Y."/>
            <person name="Taki K."/>
            <person name="Tammoja K."/>
            <person name="Tan S.L."/>
            <person name="Tang S."/>
            <person name="Taylor M.S."/>
            <person name="Tegner J."/>
            <person name="Teichmann S.A."/>
            <person name="Ueda H.R."/>
            <person name="van Nimwegen E."/>
            <person name="Verardo R."/>
            <person name="Wei C.L."/>
            <person name="Yagi K."/>
            <person name="Yamanishi H."/>
            <person name="Zabarovsky E."/>
            <person name="Zhu S."/>
            <person name="Zimmer A."/>
            <person name="Hide W."/>
            <person name="Bult C."/>
            <person name="Grimmond S.M."/>
            <person name="Teasdale R.D."/>
            <person name="Liu E.T."/>
            <person name="Brusic V."/>
            <person name="Quackenbush J."/>
            <person name="Wahlestedt C."/>
            <person name="Mattick J.S."/>
            <person name="Hume D.A."/>
            <person name="Kai C."/>
            <person name="Sasaki D."/>
            <person name="Tomaru Y."/>
            <person name="Fukuda S."/>
            <person name="Kanamori-Katayama M."/>
            <person name="Suzuki M."/>
            <person name="Aoki J."/>
            <person name="Arakawa T."/>
            <person name="Iida J."/>
            <person name="Imamura K."/>
            <person name="Itoh M."/>
            <person name="Kato T."/>
            <person name="Kawaji H."/>
            <person name="Kawagashira N."/>
            <person name="Kawashima T."/>
            <person name="Kojima M."/>
            <person name="Kondo S."/>
            <person name="Konno H."/>
            <person name="Nakano K."/>
            <person name="Ninomiya N."/>
            <person name="Nishio T."/>
            <person name="Okada M."/>
            <person name="Plessy C."/>
            <person name="Shibata K."/>
            <person name="Shiraki T."/>
            <person name="Suzuki S."/>
            <person name="Tagami M."/>
            <person name="Waki K."/>
            <person name="Watahiki A."/>
            <person name="Okamura-Oho Y."/>
            <person name="Suzuki H."/>
            <person name="Kawai J."/>
            <person name="Hayashizaki Y."/>
        </authorList>
    </citation>
    <scope>NUCLEOTIDE SEQUENCE [LARGE SCALE MRNA] (ISOFORMS 1; 2 AND 3)</scope>
    <source>
        <strain>C57BL/6J</strain>
        <strain>NOD</strain>
        <tissue>Eye</tissue>
        <tissue>Lung</tissue>
        <tissue>Spleen</tissue>
    </source>
</reference>
<reference key="4">
    <citation type="journal article" date="2009" name="PLoS Biol.">
        <title>Lineage-specific biology revealed by a finished genome assembly of the mouse.</title>
        <authorList>
            <person name="Church D.M."/>
            <person name="Goodstadt L."/>
            <person name="Hillier L.W."/>
            <person name="Zody M.C."/>
            <person name="Goldstein S."/>
            <person name="She X."/>
            <person name="Bult C.J."/>
            <person name="Agarwala R."/>
            <person name="Cherry J.L."/>
            <person name="DiCuccio M."/>
            <person name="Hlavina W."/>
            <person name="Kapustin Y."/>
            <person name="Meric P."/>
            <person name="Maglott D."/>
            <person name="Birtle Z."/>
            <person name="Marques A.C."/>
            <person name="Graves T."/>
            <person name="Zhou S."/>
            <person name="Teague B."/>
            <person name="Potamousis K."/>
            <person name="Churas C."/>
            <person name="Place M."/>
            <person name="Herschleb J."/>
            <person name="Runnheim R."/>
            <person name="Forrest D."/>
            <person name="Amos-Landgraf J."/>
            <person name="Schwartz D.C."/>
            <person name="Cheng Z."/>
            <person name="Lindblad-Toh K."/>
            <person name="Eichler E.E."/>
            <person name="Ponting C.P."/>
        </authorList>
    </citation>
    <scope>NUCLEOTIDE SEQUENCE [LARGE SCALE GENOMIC DNA]</scope>
    <source>
        <strain>C57BL/6J</strain>
    </source>
</reference>
<reference key="5">
    <citation type="journal article" date="2004" name="Genome Res.">
        <title>The status, quality, and expansion of the NIH full-length cDNA project: the Mammalian Gene Collection (MGC).</title>
        <authorList>
            <consortium name="The MGC Project Team"/>
        </authorList>
    </citation>
    <scope>NUCLEOTIDE SEQUENCE [LARGE SCALE MRNA] (ISOFORM 1)</scope>
    <source>
        <strain>FVB/N</strain>
        <tissue>Mammary tumor</tissue>
    </source>
</reference>
<reference key="6">
    <citation type="journal article" date="2010" name="Cell">
        <title>A tissue-specific atlas of mouse protein phosphorylation and expression.</title>
        <authorList>
            <person name="Huttlin E.L."/>
            <person name="Jedrychowski M.P."/>
            <person name="Elias J.E."/>
            <person name="Goswami T."/>
            <person name="Rad R."/>
            <person name="Beausoleil S.A."/>
            <person name="Villen J."/>
            <person name="Haas W."/>
            <person name="Sowa M.E."/>
            <person name="Gygi S.P."/>
        </authorList>
    </citation>
    <scope>IDENTIFICATION BY MASS SPECTROMETRY [LARGE SCALE ANALYSIS]</scope>
    <source>
        <tissue>Spleen</tissue>
    </source>
</reference>
<reference key="7">
    <citation type="journal article" date="2012" name="Science">
        <title>Feedback regulation of transcriptional termination by the mammalian circadian clock PERIOD complex.</title>
        <authorList>
            <person name="Padmanabhan K."/>
            <person name="Robles M.S."/>
            <person name="Westerling T."/>
            <person name="Weitz C.J."/>
        </authorList>
    </citation>
    <scope>IDENTIFICATION IN A LARGE PER COMPLEX</scope>
    <scope>SUBCELLULAR LOCATION</scope>
</reference>
<reference key="8">
    <citation type="journal article" date="2016" name="Cell Rep.">
        <title>T-bet activates Th1 genes through mediator and the super elongation complex.</title>
        <authorList>
            <person name="Hertweck A."/>
            <person name="Evans C.M."/>
            <person name="Eskandarpour M."/>
            <person name="Lau J.C."/>
            <person name="Oleinika K."/>
            <person name="Jackson I."/>
            <person name="Kelly A."/>
            <person name="Ambrose J."/>
            <person name="Adamson P."/>
            <person name="Cousins D.J."/>
            <person name="Lavender P."/>
            <person name="Calder V.L."/>
            <person name="Lord G.M."/>
            <person name="Jenner R.G."/>
        </authorList>
    </citation>
    <scope>INTERACTION WITH TBX21 AND CCNT1</scope>
</reference>
<reference key="9">
    <citation type="journal article" date="2019" name="Mol. Cell">
        <title>RNA Targets Ribogenesis Factor WDR43 to Chromatin for Transcription and Pluripotency Control.</title>
        <authorList>
            <person name="Bi X."/>
            <person name="Xu Y."/>
            <person name="Li T."/>
            <person name="Li X."/>
            <person name="Li W."/>
            <person name="Shao W."/>
            <person name="Wang K."/>
            <person name="Zhan G."/>
            <person name="Wu Z."/>
            <person name="Liu W."/>
            <person name="Lu J.Y."/>
            <person name="Wang L."/>
            <person name="Zhao J."/>
            <person name="Wu J."/>
            <person name="Na J."/>
            <person name="Li G."/>
            <person name="Li P."/>
            <person name="Shen X."/>
        </authorList>
    </citation>
    <scope>INTERACTION WITH WDR43</scope>
</reference>
<protein>
    <recommendedName>
        <fullName>Cyclin-dependent kinase 9</fullName>
        <ecNumber>2.7.11.22</ecNumber>
        <ecNumber>2.7.11.23</ecNumber>
    </recommendedName>
    <alternativeName>
        <fullName>Cell division protein kinase 9</fullName>
    </alternativeName>
</protein>
<accession>Q99J95</accession>
<accession>B0R020</accession>
<accession>Q3U002</accession>
<accession>Q3UMY2</accession>
<accession>Q3UPT3</accession>
<accession>Q3UQI6</accession>
<accession>Q8BTN0</accession>
<organism>
    <name type="scientific">Mus musculus</name>
    <name type="common">Mouse</name>
    <dbReference type="NCBI Taxonomy" id="10090"/>
    <lineage>
        <taxon>Eukaryota</taxon>
        <taxon>Metazoa</taxon>
        <taxon>Chordata</taxon>
        <taxon>Craniata</taxon>
        <taxon>Vertebrata</taxon>
        <taxon>Euteleostomi</taxon>
        <taxon>Mammalia</taxon>
        <taxon>Eutheria</taxon>
        <taxon>Euarchontoglires</taxon>
        <taxon>Glires</taxon>
        <taxon>Rodentia</taxon>
        <taxon>Myomorpha</taxon>
        <taxon>Muroidea</taxon>
        <taxon>Muridae</taxon>
        <taxon>Murinae</taxon>
        <taxon>Mus</taxon>
        <taxon>Mus</taxon>
    </lineage>
</organism>
<dbReference type="EC" id="2.7.11.22"/>
<dbReference type="EC" id="2.7.11.23"/>
<dbReference type="EMBL" id="AF327431">
    <property type="protein sequence ID" value="AAK15699.1"/>
    <property type="molecule type" value="mRNA"/>
</dbReference>
<dbReference type="EMBL" id="AF327569">
    <property type="protein sequence ID" value="AAK15706.1"/>
    <property type="molecule type" value="Genomic_DNA"/>
</dbReference>
<dbReference type="EMBL" id="AK089276">
    <property type="protein sequence ID" value="BAC40824.1"/>
    <property type="molecule type" value="mRNA"/>
</dbReference>
<dbReference type="EMBL" id="AK142397">
    <property type="protein sequence ID" value="BAE25055.1"/>
    <property type="molecule type" value="mRNA"/>
</dbReference>
<dbReference type="EMBL" id="AK143217">
    <property type="protein sequence ID" value="BAE25312.1"/>
    <property type="molecule type" value="mRNA"/>
</dbReference>
<dbReference type="EMBL" id="AK144607">
    <property type="protein sequence ID" value="BAE25966.1"/>
    <property type="status" value="ALT_FRAME"/>
    <property type="molecule type" value="mRNA"/>
</dbReference>
<dbReference type="EMBL" id="AK157340">
    <property type="protein sequence ID" value="BAE34054.1"/>
    <property type="molecule type" value="mRNA"/>
</dbReference>
<dbReference type="EMBL" id="AL772271">
    <property type="status" value="NOT_ANNOTATED_CDS"/>
    <property type="molecule type" value="Genomic_DNA"/>
</dbReference>
<dbReference type="EMBL" id="BC003901">
    <property type="protein sequence ID" value="AAH03901.1"/>
    <property type="molecule type" value="mRNA"/>
</dbReference>
<dbReference type="CCDS" id="CCDS15927.1">
    <molecule id="Q99J95-1"/>
</dbReference>
<dbReference type="RefSeq" id="NP_570930.1">
    <molecule id="Q99J95-1"/>
    <property type="nucleotide sequence ID" value="NM_130860.3"/>
</dbReference>
<dbReference type="RefSeq" id="XP_011237303.1">
    <molecule id="Q99J95-3"/>
    <property type="nucleotide sequence ID" value="XM_011239001.2"/>
</dbReference>
<dbReference type="SMR" id="Q99J95"/>
<dbReference type="BioGRID" id="223714">
    <property type="interactions" value="11"/>
</dbReference>
<dbReference type="ComplexPortal" id="CPX-230">
    <property type="entry name" value="Positive transcription elongation factor B, CDK9-cyclinT1 complex"/>
</dbReference>
<dbReference type="ComplexPortal" id="CPX-323">
    <property type="entry name" value="Positive transcription elongation factor B, CDK9-cyclinT2a complex"/>
</dbReference>
<dbReference type="ComplexPortal" id="CPX-324">
    <property type="entry name" value="Positive transcription elongation factor B, CDK9-cyclinT2b complex"/>
</dbReference>
<dbReference type="CORUM" id="Q99J95"/>
<dbReference type="DIP" id="DIP-46368N"/>
<dbReference type="FunCoup" id="Q99J95">
    <property type="interactions" value="4117"/>
</dbReference>
<dbReference type="IntAct" id="Q99J95">
    <property type="interactions" value="103"/>
</dbReference>
<dbReference type="MINT" id="Q99J95"/>
<dbReference type="STRING" id="10090.ENSMUSP00000009699"/>
<dbReference type="ChEMBL" id="CHEMBL4105875"/>
<dbReference type="iPTMnet" id="Q99J95"/>
<dbReference type="PhosphoSitePlus" id="Q99J95"/>
<dbReference type="SwissPalm" id="Q99J95"/>
<dbReference type="jPOST" id="Q99J95"/>
<dbReference type="PaxDb" id="10090-ENSMUSP00000009699"/>
<dbReference type="PeptideAtlas" id="Q99J95"/>
<dbReference type="ProteomicsDB" id="280041">
    <molecule id="Q99J95-1"/>
</dbReference>
<dbReference type="ProteomicsDB" id="280042">
    <molecule id="Q99J95-2"/>
</dbReference>
<dbReference type="ProteomicsDB" id="280043">
    <molecule id="Q99J95-3"/>
</dbReference>
<dbReference type="Pumba" id="Q99J95"/>
<dbReference type="Antibodypedia" id="1447">
    <property type="antibodies" value="563 antibodies from 41 providers"/>
</dbReference>
<dbReference type="DNASU" id="107951"/>
<dbReference type="Ensembl" id="ENSMUST00000009699.16">
    <molecule id="Q99J95-1"/>
    <property type="protein sequence ID" value="ENSMUSP00000009699.10"/>
    <property type="gene ID" value="ENSMUSG00000009555.17"/>
</dbReference>
<dbReference type="Ensembl" id="ENSMUST00000120105.8">
    <molecule id="Q99J95-2"/>
    <property type="protein sequence ID" value="ENSMUSP00000113327.2"/>
    <property type="gene ID" value="ENSMUSG00000009555.17"/>
</dbReference>
<dbReference type="GeneID" id="107951"/>
<dbReference type="KEGG" id="mmu:107951"/>
<dbReference type="UCSC" id="uc008jgn.2">
    <molecule id="Q99J95-1"/>
    <property type="organism name" value="mouse"/>
</dbReference>
<dbReference type="AGR" id="MGI:1328368"/>
<dbReference type="CTD" id="1025"/>
<dbReference type="MGI" id="MGI:1328368">
    <property type="gene designation" value="Cdk9"/>
</dbReference>
<dbReference type="VEuPathDB" id="HostDB:ENSMUSG00000009555"/>
<dbReference type="eggNOG" id="KOG0669">
    <property type="taxonomic scope" value="Eukaryota"/>
</dbReference>
<dbReference type="GeneTree" id="ENSGT00940000155373"/>
<dbReference type="HOGENOM" id="CLU_000288_181_1_1"/>
<dbReference type="InParanoid" id="Q99J95"/>
<dbReference type="OMA" id="FPHCDES"/>
<dbReference type="OrthoDB" id="6836at9989"/>
<dbReference type="PhylomeDB" id="Q99J95"/>
<dbReference type="TreeFam" id="TF101039"/>
<dbReference type="BRENDA" id="2.7.11.23">
    <property type="organism ID" value="3474"/>
</dbReference>
<dbReference type="Reactome" id="R-MMU-112382">
    <property type="pathway name" value="Formation of RNA Pol II elongation complex"/>
</dbReference>
<dbReference type="Reactome" id="R-MMU-2173796">
    <property type="pathway name" value="SMAD2/SMAD3:SMAD4 heterotrimer regulates transcription"/>
</dbReference>
<dbReference type="Reactome" id="R-MMU-674695">
    <property type="pathway name" value="RNA Polymerase II Pre-transcription Events"/>
</dbReference>
<dbReference type="Reactome" id="R-MMU-6796648">
    <property type="pathway name" value="TP53 Regulates Transcription of DNA Repair Genes"/>
</dbReference>
<dbReference type="Reactome" id="R-MMU-6807505">
    <property type="pathway name" value="RNA polymerase II transcribes snRNA genes"/>
</dbReference>
<dbReference type="Reactome" id="R-MMU-75955">
    <property type="pathway name" value="RNA Polymerase II Transcription Elongation"/>
</dbReference>
<dbReference type="Reactome" id="R-MMU-9018519">
    <property type="pathway name" value="Estrogen-dependent gene expression"/>
</dbReference>
<dbReference type="BioGRID-ORCS" id="107951">
    <property type="hits" value="31 hits in 122 CRISPR screens"/>
</dbReference>
<dbReference type="ChiTaRS" id="Cdk9">
    <property type="organism name" value="mouse"/>
</dbReference>
<dbReference type="PRO" id="PR:Q99J95"/>
<dbReference type="Proteomes" id="UP000000589">
    <property type="component" value="Chromosome 2"/>
</dbReference>
<dbReference type="RNAct" id="Q99J95">
    <property type="molecule type" value="protein"/>
</dbReference>
<dbReference type="Bgee" id="ENSMUSG00000009555">
    <property type="expression patterns" value="Expressed in granulocyte and 266 other cell types or tissues"/>
</dbReference>
<dbReference type="ExpressionAtlas" id="Q99J95">
    <property type="expression patterns" value="baseline and differential"/>
</dbReference>
<dbReference type="GO" id="GO:0008024">
    <property type="term" value="C:cyclin/CDK positive transcription elongation factor complex"/>
    <property type="evidence" value="ECO:0000314"/>
    <property type="project" value="MGI"/>
</dbReference>
<dbReference type="GO" id="GO:0036464">
    <property type="term" value="C:cytoplasmic ribonucleoprotein granule"/>
    <property type="evidence" value="ECO:0007669"/>
    <property type="project" value="Ensembl"/>
</dbReference>
<dbReference type="GO" id="GO:0005634">
    <property type="term" value="C:nucleus"/>
    <property type="evidence" value="ECO:0000314"/>
    <property type="project" value="MGI"/>
</dbReference>
<dbReference type="GO" id="GO:0070691">
    <property type="term" value="C:P-TEFb complex"/>
    <property type="evidence" value="ECO:0000250"/>
    <property type="project" value="UniProtKB"/>
</dbReference>
<dbReference type="GO" id="GO:0016605">
    <property type="term" value="C:PML body"/>
    <property type="evidence" value="ECO:0007669"/>
    <property type="project" value="UniProtKB-SubCell"/>
</dbReference>
<dbReference type="GO" id="GO:0008023">
    <property type="term" value="C:transcription elongation factor complex"/>
    <property type="evidence" value="ECO:0000250"/>
    <property type="project" value="UniProtKB"/>
</dbReference>
<dbReference type="GO" id="GO:0097322">
    <property type="term" value="F:7SK snRNA binding"/>
    <property type="evidence" value="ECO:0000250"/>
    <property type="project" value="UniProtKB"/>
</dbReference>
<dbReference type="GO" id="GO:0005524">
    <property type="term" value="F:ATP binding"/>
    <property type="evidence" value="ECO:0007669"/>
    <property type="project" value="UniProtKB-KW"/>
</dbReference>
<dbReference type="GO" id="GO:0003682">
    <property type="term" value="F:chromatin binding"/>
    <property type="evidence" value="ECO:0000314"/>
    <property type="project" value="UniProtKB"/>
</dbReference>
<dbReference type="GO" id="GO:0004693">
    <property type="term" value="F:cyclin-dependent protein serine/threonine kinase activity"/>
    <property type="evidence" value="ECO:0007669"/>
    <property type="project" value="UniProtKB-EC"/>
</dbReference>
<dbReference type="GO" id="GO:0003677">
    <property type="term" value="F:DNA binding"/>
    <property type="evidence" value="ECO:0000266"/>
    <property type="project" value="MGI"/>
</dbReference>
<dbReference type="GO" id="GO:0019901">
    <property type="term" value="F:protein kinase binding"/>
    <property type="evidence" value="ECO:0000314"/>
    <property type="project" value="MGI"/>
</dbReference>
<dbReference type="GO" id="GO:0106310">
    <property type="term" value="F:protein serine kinase activity"/>
    <property type="evidence" value="ECO:0007669"/>
    <property type="project" value="RHEA"/>
</dbReference>
<dbReference type="GO" id="GO:0000978">
    <property type="term" value="F:RNA polymerase II cis-regulatory region sequence-specific DNA binding"/>
    <property type="evidence" value="ECO:0000314"/>
    <property type="project" value="MGI"/>
</dbReference>
<dbReference type="GO" id="GO:0008353">
    <property type="term" value="F:RNA polymerase II CTD heptapeptide repeat kinase activity"/>
    <property type="evidence" value="ECO:0000315"/>
    <property type="project" value="MGI"/>
</dbReference>
<dbReference type="GO" id="GO:0017069">
    <property type="term" value="F:snRNA binding"/>
    <property type="evidence" value="ECO:0000314"/>
    <property type="project" value="MGI"/>
</dbReference>
<dbReference type="GO" id="GO:0000976">
    <property type="term" value="F:transcription cis-regulatory region binding"/>
    <property type="evidence" value="ECO:0000314"/>
    <property type="project" value="BHF-UCL"/>
</dbReference>
<dbReference type="GO" id="GO:0001223">
    <property type="term" value="F:transcription coactivator binding"/>
    <property type="evidence" value="ECO:0007669"/>
    <property type="project" value="Ensembl"/>
</dbReference>
<dbReference type="GO" id="GO:0003711">
    <property type="term" value="F:transcription elongation factor activity"/>
    <property type="evidence" value="ECO:0007669"/>
    <property type="project" value="Ensembl"/>
</dbReference>
<dbReference type="GO" id="GO:0071345">
    <property type="term" value="P:cellular response to cytokine stimulus"/>
    <property type="evidence" value="ECO:0007669"/>
    <property type="project" value="Ensembl"/>
</dbReference>
<dbReference type="GO" id="GO:0006281">
    <property type="term" value="P:DNA repair"/>
    <property type="evidence" value="ECO:0007669"/>
    <property type="project" value="UniProtKB-KW"/>
</dbReference>
<dbReference type="GO" id="GO:0120186">
    <property type="term" value="P:negative regulation of protein localization to chromatin"/>
    <property type="evidence" value="ECO:0007669"/>
    <property type="project" value="Ensembl"/>
</dbReference>
<dbReference type="GO" id="GO:0051647">
    <property type="term" value="P:nucleus localization"/>
    <property type="evidence" value="ECO:0007669"/>
    <property type="project" value="Ensembl"/>
</dbReference>
<dbReference type="GO" id="GO:0043923">
    <property type="term" value="P:positive regulation by host of viral transcription"/>
    <property type="evidence" value="ECO:0007669"/>
    <property type="project" value="Ensembl"/>
</dbReference>
<dbReference type="GO" id="GO:0120187">
    <property type="term" value="P:positive regulation of protein localization to chromatin"/>
    <property type="evidence" value="ECO:0007669"/>
    <property type="project" value="Ensembl"/>
</dbReference>
<dbReference type="GO" id="GO:0032968">
    <property type="term" value="P:positive regulation of transcription elongation by RNA polymerase II"/>
    <property type="evidence" value="ECO:0000250"/>
    <property type="project" value="UniProtKB"/>
</dbReference>
<dbReference type="GO" id="GO:0006282">
    <property type="term" value="P:regulation of DNA repair"/>
    <property type="evidence" value="ECO:0007669"/>
    <property type="project" value="Ensembl"/>
</dbReference>
<dbReference type="GO" id="GO:0031440">
    <property type="term" value="P:regulation of mRNA 3'-end processing"/>
    <property type="evidence" value="ECO:0000315"/>
    <property type="project" value="UniProtKB"/>
</dbReference>
<dbReference type="GO" id="GO:0051147">
    <property type="term" value="P:regulation of muscle cell differentiation"/>
    <property type="evidence" value="ECO:0007669"/>
    <property type="project" value="Ensembl"/>
</dbReference>
<dbReference type="GO" id="GO:0031297">
    <property type="term" value="P:replication fork processing"/>
    <property type="evidence" value="ECO:0007669"/>
    <property type="project" value="Ensembl"/>
</dbReference>
<dbReference type="GO" id="GO:0006366">
    <property type="term" value="P:transcription by RNA polymerase II"/>
    <property type="evidence" value="ECO:0000250"/>
    <property type="project" value="UniProtKB"/>
</dbReference>
<dbReference type="GO" id="GO:0140673">
    <property type="term" value="P:transcription elongation-coupled chromatin remodeling"/>
    <property type="evidence" value="ECO:0007669"/>
    <property type="project" value="Ensembl"/>
</dbReference>
<dbReference type="CDD" id="cd07865">
    <property type="entry name" value="STKc_CDK9"/>
    <property type="match status" value="1"/>
</dbReference>
<dbReference type="FunFam" id="1.10.510.10:FF:000203">
    <property type="entry name" value="Cyclin-dependent kinase 9"/>
    <property type="match status" value="1"/>
</dbReference>
<dbReference type="FunFam" id="3.30.200.20:FF:000227">
    <property type="entry name" value="Cyclin-dependent kinase 9"/>
    <property type="match status" value="1"/>
</dbReference>
<dbReference type="Gene3D" id="3.30.200.20">
    <property type="entry name" value="Phosphorylase Kinase, domain 1"/>
    <property type="match status" value="1"/>
</dbReference>
<dbReference type="Gene3D" id="1.10.510.10">
    <property type="entry name" value="Transferase(Phosphotransferase) domain 1"/>
    <property type="match status" value="1"/>
</dbReference>
<dbReference type="InterPro" id="IPR050108">
    <property type="entry name" value="CDK"/>
</dbReference>
<dbReference type="InterPro" id="IPR011009">
    <property type="entry name" value="Kinase-like_dom_sf"/>
</dbReference>
<dbReference type="InterPro" id="IPR000719">
    <property type="entry name" value="Prot_kinase_dom"/>
</dbReference>
<dbReference type="InterPro" id="IPR017441">
    <property type="entry name" value="Protein_kinase_ATP_BS"/>
</dbReference>
<dbReference type="InterPro" id="IPR008271">
    <property type="entry name" value="Ser/Thr_kinase_AS"/>
</dbReference>
<dbReference type="PANTHER" id="PTHR24056">
    <property type="entry name" value="CELL DIVISION PROTEIN KINASE"/>
    <property type="match status" value="1"/>
</dbReference>
<dbReference type="PANTHER" id="PTHR24056:SF233">
    <property type="entry name" value="CYCLIN-DEPENDENT KINASE 9"/>
    <property type="match status" value="1"/>
</dbReference>
<dbReference type="Pfam" id="PF00069">
    <property type="entry name" value="Pkinase"/>
    <property type="match status" value="1"/>
</dbReference>
<dbReference type="SMART" id="SM00220">
    <property type="entry name" value="S_TKc"/>
    <property type="match status" value="1"/>
</dbReference>
<dbReference type="SUPFAM" id="SSF56112">
    <property type="entry name" value="Protein kinase-like (PK-like)"/>
    <property type="match status" value="1"/>
</dbReference>
<dbReference type="PROSITE" id="PS00107">
    <property type="entry name" value="PROTEIN_KINASE_ATP"/>
    <property type="match status" value="1"/>
</dbReference>
<dbReference type="PROSITE" id="PS50011">
    <property type="entry name" value="PROTEIN_KINASE_DOM"/>
    <property type="match status" value="1"/>
</dbReference>
<dbReference type="PROSITE" id="PS00108">
    <property type="entry name" value="PROTEIN_KINASE_ST"/>
    <property type="match status" value="1"/>
</dbReference>